<protein>
    <recommendedName>
        <fullName>Non-specific lipid-transfer protein 2</fullName>
        <shortName>nsLTP2</shortName>
    </recommendedName>
    <alternativeName>
        <fullName>7 kDa lipid transfer protein</fullName>
    </alternativeName>
</protein>
<keyword id="KW-0002">3D-structure</keyword>
<keyword id="KW-0903">Direct protein sequencing</keyword>
<keyword id="KW-1015">Disulfide bond</keyword>
<keyword id="KW-0446">Lipid-binding</keyword>
<keyword id="KW-1185">Reference proteome</keyword>
<keyword id="KW-0732">Signal</keyword>
<keyword id="KW-0813">Transport</keyword>
<feature type="signal peptide" evidence="2">
    <location>
        <begin position="1"/>
        <end position="27"/>
    </location>
</feature>
<feature type="chain" id="PRO_0000153892" description="Non-specific lipid-transfer protein 2">
    <location>
        <begin position="28"/>
        <end position="96"/>
    </location>
</feature>
<feature type="disulfide bond" evidence="1 2 4">
    <location>
        <begin position="30"/>
        <end position="62"/>
    </location>
</feature>
<feature type="disulfide bond" evidence="1 2 4">
    <location>
        <begin position="38"/>
        <end position="52"/>
    </location>
</feature>
<feature type="disulfide bond" evidence="1 2 4">
    <location>
        <begin position="53"/>
        <end position="88"/>
    </location>
</feature>
<feature type="disulfide bond" evidence="1 2 4">
    <location>
        <begin position="64"/>
        <end position="95"/>
    </location>
</feature>
<feature type="turn" evidence="5">
    <location>
        <begin position="31"/>
        <end position="34"/>
    </location>
</feature>
<feature type="helix" evidence="5">
    <location>
        <begin position="35"/>
        <end position="42"/>
    </location>
</feature>
<feature type="helix" evidence="5">
    <location>
        <begin position="50"/>
        <end position="66"/>
    </location>
</feature>
<feature type="helix" evidence="5">
    <location>
        <begin position="72"/>
        <end position="75"/>
    </location>
</feature>
<feature type="turn" evidence="5">
    <location>
        <begin position="77"/>
        <end position="80"/>
    </location>
</feature>
<feature type="helix" evidence="5">
    <location>
        <begin position="81"/>
        <end position="83"/>
    </location>
</feature>
<name>NLTPX_ORYSJ</name>
<gene>
    <name type="primary">LTP-2</name>
    <name type="ordered locus">Os03g0111300</name>
    <name type="ordered locus">LOC_Os03g02050</name>
    <name type="ORF">OsJ_008807</name>
</gene>
<comment type="function">
    <text>Transfer lipids across membranes. May play a role in plant defense or in the biosynthesis of cuticle layers.</text>
</comment>
<comment type="mass spectrometry" mass="7001.8" method="Electrospray" evidence="2"/>
<comment type="similarity">
    <text evidence="3">Belongs to the plant LTP family. B11E subfamily.</text>
</comment>
<comment type="sequence caution" evidence="3">
    <conflict type="erroneous initiation">
        <sequence resource="EMBL-CDS" id="EAZ25324"/>
    </conflict>
    <text>Truncated N-terminus.</text>
</comment>
<evidence type="ECO:0000269" key="1">
    <source>
    </source>
</evidence>
<evidence type="ECO:0000269" key="2">
    <source>
    </source>
</evidence>
<evidence type="ECO:0000305" key="3"/>
<evidence type="ECO:0007744" key="4">
    <source>
        <dbReference type="PDB" id="1L6H"/>
    </source>
</evidence>
<evidence type="ECO:0007829" key="5">
    <source>
        <dbReference type="PDB" id="1L6H"/>
    </source>
</evidence>
<dbReference type="EMBL" id="DP000009">
    <property type="protein sequence ID" value="ABF93598.1"/>
    <property type="molecule type" value="Genomic_DNA"/>
</dbReference>
<dbReference type="EMBL" id="AP008209">
    <property type="protein sequence ID" value="BAF10637.1"/>
    <property type="molecule type" value="Genomic_DNA"/>
</dbReference>
<dbReference type="EMBL" id="AP014959">
    <property type="protein sequence ID" value="BAS81929.1"/>
    <property type="molecule type" value="Genomic_DNA"/>
</dbReference>
<dbReference type="EMBL" id="CM000140">
    <property type="protein sequence ID" value="EAZ25324.1"/>
    <property type="status" value="ALT_INIT"/>
    <property type="molecule type" value="Genomic_DNA"/>
</dbReference>
<dbReference type="EMBL" id="AK062506">
    <property type="protein sequence ID" value="BAG88346.1"/>
    <property type="molecule type" value="mRNA"/>
</dbReference>
<dbReference type="RefSeq" id="XP_015629253.1">
    <property type="nucleotide sequence ID" value="XM_015773767.1"/>
</dbReference>
<dbReference type="PDB" id="1L6H">
    <property type="method" value="NMR"/>
    <property type="chains" value="A=28-96"/>
</dbReference>
<dbReference type="PDBsum" id="1L6H"/>
<dbReference type="BMRB" id="Q10ST8"/>
<dbReference type="SMR" id="Q10ST8"/>
<dbReference type="FunCoup" id="Q10ST8">
    <property type="interactions" value="2"/>
</dbReference>
<dbReference type="STRING" id="39947.Q10ST8"/>
<dbReference type="PaxDb" id="39947-Q10ST8"/>
<dbReference type="EnsemblPlants" id="Os03t0111300-01">
    <property type="protein sequence ID" value="Os03t0111300-01"/>
    <property type="gene ID" value="Os03g0111300"/>
</dbReference>
<dbReference type="Gramene" id="Os03t0111300-01">
    <property type="protein sequence ID" value="Os03t0111300-01"/>
    <property type="gene ID" value="Os03g0111300"/>
</dbReference>
<dbReference type="KEGG" id="dosa:Os03g0111300"/>
<dbReference type="eggNOG" id="ENOG502S3N0">
    <property type="taxonomic scope" value="Eukaryota"/>
</dbReference>
<dbReference type="HOGENOM" id="CLU_158223_2_0_1"/>
<dbReference type="InParanoid" id="Q10ST8"/>
<dbReference type="OMA" id="HETCLCT"/>
<dbReference type="OrthoDB" id="665742at2759"/>
<dbReference type="EvolutionaryTrace" id="Q10ST8"/>
<dbReference type="Proteomes" id="UP000000763">
    <property type="component" value="Chromosome 3"/>
</dbReference>
<dbReference type="Proteomes" id="UP000007752">
    <property type="component" value="Chromosome 3"/>
</dbReference>
<dbReference type="Proteomes" id="UP000059680">
    <property type="component" value="Chromosome 3"/>
</dbReference>
<dbReference type="GO" id="GO:0008289">
    <property type="term" value="F:lipid binding"/>
    <property type="evidence" value="ECO:0007669"/>
    <property type="project" value="UniProtKB-KW"/>
</dbReference>
<dbReference type="GO" id="GO:0006869">
    <property type="term" value="P:lipid transport"/>
    <property type="evidence" value="ECO:0007669"/>
    <property type="project" value="InterPro"/>
</dbReference>
<dbReference type="CDD" id="cd01959">
    <property type="entry name" value="nsLTP2"/>
    <property type="match status" value="1"/>
</dbReference>
<dbReference type="Gene3D" id="1.10.110.10">
    <property type="entry name" value="Plant lipid-transfer and hydrophobic proteins"/>
    <property type="match status" value="1"/>
</dbReference>
<dbReference type="InterPro" id="IPR036312">
    <property type="entry name" value="Bifun_inhib/LTP/seed_sf"/>
</dbReference>
<dbReference type="InterPro" id="IPR016140">
    <property type="entry name" value="Bifunc_inhib/LTP/seed_store"/>
</dbReference>
<dbReference type="InterPro" id="IPR033872">
    <property type="entry name" value="nsLTP2"/>
</dbReference>
<dbReference type="PANTHER" id="PTHR33214">
    <property type="entry name" value="BIFUNCTIONAL INHIBITOR/LIPID-TRANSFER PROTEIN/SEED STORAGE 2S ALBUMIN SUPERFAMILY PROTEIN"/>
    <property type="match status" value="1"/>
</dbReference>
<dbReference type="PANTHER" id="PTHR33214:SF34">
    <property type="entry name" value="NON-SPECIFIC LIPID-TRANSFER PROTEIN 2"/>
    <property type="match status" value="1"/>
</dbReference>
<dbReference type="Pfam" id="PF00234">
    <property type="entry name" value="Tryp_alpha_amyl"/>
    <property type="match status" value="1"/>
</dbReference>
<dbReference type="SUPFAM" id="SSF47699">
    <property type="entry name" value="Bifunctional inhibitor/lipid-transfer protein/seed storage 2S albumin"/>
    <property type="match status" value="1"/>
</dbReference>
<proteinExistence type="evidence at protein level"/>
<accession>Q10ST8</accession>
<accession>A3ADD5</accession>
<accession>B7E7J9</accession>
<accession>P83210</accession>
<accession>Q40631</accession>
<reference key="1">
    <citation type="journal article" date="2005" name="Genome Res.">
        <title>Sequence, annotation, and analysis of synteny between rice chromosome 3 and diverged grass species.</title>
        <authorList>
            <consortium name="The rice chromosome 3 sequencing consortium"/>
            <person name="Buell C.R."/>
            <person name="Yuan Q."/>
            <person name="Ouyang S."/>
            <person name="Liu J."/>
            <person name="Zhu W."/>
            <person name="Wang A."/>
            <person name="Maiti R."/>
            <person name="Haas B."/>
            <person name="Wortman J."/>
            <person name="Pertea M."/>
            <person name="Jones K.M."/>
            <person name="Kim M."/>
            <person name="Overton L."/>
            <person name="Tsitrin T."/>
            <person name="Fadrosh D."/>
            <person name="Bera J."/>
            <person name="Weaver B."/>
            <person name="Jin S."/>
            <person name="Johri S."/>
            <person name="Reardon M."/>
            <person name="Webb K."/>
            <person name="Hill J."/>
            <person name="Moffat K."/>
            <person name="Tallon L."/>
            <person name="Van Aken S."/>
            <person name="Lewis M."/>
            <person name="Utterback T."/>
            <person name="Feldblyum T."/>
            <person name="Zismann V."/>
            <person name="Iobst S."/>
            <person name="Hsiao J."/>
            <person name="de Vazeille A.R."/>
            <person name="Salzberg S.L."/>
            <person name="White O."/>
            <person name="Fraser C.M."/>
            <person name="Yu Y."/>
            <person name="Kim H."/>
            <person name="Rambo T."/>
            <person name="Currie J."/>
            <person name="Collura K."/>
            <person name="Kernodle-Thompson S."/>
            <person name="Wei F."/>
            <person name="Kudrna K."/>
            <person name="Ammiraju J.S.S."/>
            <person name="Luo M."/>
            <person name="Goicoechea J.L."/>
            <person name="Wing R.A."/>
            <person name="Henry D."/>
            <person name="Oates R."/>
            <person name="Palmer M."/>
            <person name="Pries G."/>
            <person name="Saski C."/>
            <person name="Simmons J."/>
            <person name="Soderlund C."/>
            <person name="Nelson W."/>
            <person name="de la Bastide M."/>
            <person name="Spiegel L."/>
            <person name="Nascimento L."/>
            <person name="Huang E."/>
            <person name="Preston R."/>
            <person name="Zutavern T."/>
            <person name="Palmer L."/>
            <person name="O'Shaughnessy A."/>
            <person name="Dike S."/>
            <person name="McCombie W.R."/>
            <person name="Minx P."/>
            <person name="Cordum H."/>
            <person name="Wilson R."/>
            <person name="Jin W."/>
            <person name="Lee H.R."/>
            <person name="Jiang J."/>
            <person name="Jackson S."/>
        </authorList>
    </citation>
    <scope>NUCLEOTIDE SEQUENCE [LARGE SCALE GENOMIC DNA]</scope>
    <source>
        <strain>cv. Nipponbare</strain>
    </source>
</reference>
<reference key="2">
    <citation type="journal article" date="2005" name="Nature">
        <title>The map-based sequence of the rice genome.</title>
        <authorList>
            <consortium name="International rice genome sequencing project (IRGSP)"/>
        </authorList>
    </citation>
    <scope>NUCLEOTIDE SEQUENCE [LARGE SCALE GENOMIC DNA]</scope>
    <source>
        <strain>cv. Nipponbare</strain>
    </source>
</reference>
<reference key="3">
    <citation type="journal article" date="2008" name="Nucleic Acids Res.">
        <title>The rice annotation project database (RAP-DB): 2008 update.</title>
        <authorList>
            <consortium name="The rice annotation project (RAP)"/>
        </authorList>
    </citation>
    <scope>GENOME REANNOTATION</scope>
    <source>
        <strain>cv. Nipponbare</strain>
    </source>
</reference>
<reference key="4">
    <citation type="journal article" date="2013" name="Rice">
        <title>Improvement of the Oryza sativa Nipponbare reference genome using next generation sequence and optical map data.</title>
        <authorList>
            <person name="Kawahara Y."/>
            <person name="de la Bastide M."/>
            <person name="Hamilton J.P."/>
            <person name="Kanamori H."/>
            <person name="McCombie W.R."/>
            <person name="Ouyang S."/>
            <person name="Schwartz D.C."/>
            <person name="Tanaka T."/>
            <person name="Wu J."/>
            <person name="Zhou S."/>
            <person name="Childs K.L."/>
            <person name="Davidson R.M."/>
            <person name="Lin H."/>
            <person name="Quesada-Ocampo L."/>
            <person name="Vaillancourt B."/>
            <person name="Sakai H."/>
            <person name="Lee S.S."/>
            <person name="Kim J."/>
            <person name="Numa H."/>
            <person name="Itoh T."/>
            <person name="Buell C.R."/>
            <person name="Matsumoto T."/>
        </authorList>
    </citation>
    <scope>GENOME REANNOTATION</scope>
    <source>
        <strain>cv. Nipponbare</strain>
    </source>
</reference>
<reference key="5">
    <citation type="journal article" date="2005" name="PLoS Biol.">
        <title>The genomes of Oryza sativa: a history of duplications.</title>
        <authorList>
            <person name="Yu J."/>
            <person name="Wang J."/>
            <person name="Lin W."/>
            <person name="Li S."/>
            <person name="Li H."/>
            <person name="Zhou J."/>
            <person name="Ni P."/>
            <person name="Dong W."/>
            <person name="Hu S."/>
            <person name="Zeng C."/>
            <person name="Zhang J."/>
            <person name="Zhang Y."/>
            <person name="Li R."/>
            <person name="Xu Z."/>
            <person name="Li S."/>
            <person name="Li X."/>
            <person name="Zheng H."/>
            <person name="Cong L."/>
            <person name="Lin L."/>
            <person name="Yin J."/>
            <person name="Geng J."/>
            <person name="Li G."/>
            <person name="Shi J."/>
            <person name="Liu J."/>
            <person name="Lv H."/>
            <person name="Li J."/>
            <person name="Wang J."/>
            <person name="Deng Y."/>
            <person name="Ran L."/>
            <person name="Shi X."/>
            <person name="Wang X."/>
            <person name="Wu Q."/>
            <person name="Li C."/>
            <person name="Ren X."/>
            <person name="Wang J."/>
            <person name="Wang X."/>
            <person name="Li D."/>
            <person name="Liu D."/>
            <person name="Zhang X."/>
            <person name="Ji Z."/>
            <person name="Zhao W."/>
            <person name="Sun Y."/>
            <person name="Zhang Z."/>
            <person name="Bao J."/>
            <person name="Han Y."/>
            <person name="Dong L."/>
            <person name="Ji J."/>
            <person name="Chen P."/>
            <person name="Wu S."/>
            <person name="Liu J."/>
            <person name="Xiao Y."/>
            <person name="Bu D."/>
            <person name="Tan J."/>
            <person name="Yang L."/>
            <person name="Ye C."/>
            <person name="Zhang J."/>
            <person name="Xu J."/>
            <person name="Zhou Y."/>
            <person name="Yu Y."/>
            <person name="Zhang B."/>
            <person name="Zhuang S."/>
            <person name="Wei H."/>
            <person name="Liu B."/>
            <person name="Lei M."/>
            <person name="Yu H."/>
            <person name="Li Y."/>
            <person name="Xu H."/>
            <person name="Wei S."/>
            <person name="He X."/>
            <person name="Fang L."/>
            <person name="Zhang Z."/>
            <person name="Zhang Y."/>
            <person name="Huang X."/>
            <person name="Su Z."/>
            <person name="Tong W."/>
            <person name="Li J."/>
            <person name="Tong Z."/>
            <person name="Li S."/>
            <person name="Ye J."/>
            <person name="Wang L."/>
            <person name="Fang L."/>
            <person name="Lei T."/>
            <person name="Chen C.-S."/>
            <person name="Chen H.-C."/>
            <person name="Xu Z."/>
            <person name="Li H."/>
            <person name="Huang H."/>
            <person name="Zhang F."/>
            <person name="Xu H."/>
            <person name="Li N."/>
            <person name="Zhao C."/>
            <person name="Li S."/>
            <person name="Dong L."/>
            <person name="Huang Y."/>
            <person name="Li L."/>
            <person name="Xi Y."/>
            <person name="Qi Q."/>
            <person name="Li W."/>
            <person name="Zhang B."/>
            <person name="Hu W."/>
            <person name="Zhang Y."/>
            <person name="Tian X."/>
            <person name="Jiao Y."/>
            <person name="Liang X."/>
            <person name="Jin J."/>
            <person name="Gao L."/>
            <person name="Zheng W."/>
            <person name="Hao B."/>
            <person name="Liu S.-M."/>
            <person name="Wang W."/>
            <person name="Yuan L."/>
            <person name="Cao M."/>
            <person name="McDermott J."/>
            <person name="Samudrala R."/>
            <person name="Wang J."/>
            <person name="Wong G.K.-S."/>
            <person name="Yang H."/>
        </authorList>
    </citation>
    <scope>NUCLEOTIDE SEQUENCE [LARGE SCALE GENOMIC DNA]</scope>
    <source>
        <strain>cv. Nipponbare</strain>
    </source>
</reference>
<reference key="6">
    <citation type="journal article" date="2003" name="Science">
        <title>Collection, mapping, and annotation of over 28,000 cDNA clones from japonica rice.</title>
        <authorList>
            <consortium name="The rice full-length cDNA consortium"/>
        </authorList>
    </citation>
    <scope>NUCLEOTIDE SEQUENCE [LARGE SCALE MRNA]</scope>
    <source>
        <strain>cv. Nipponbare</strain>
    </source>
</reference>
<reference key="7">
    <citation type="journal article" date="2002" name="Biochem. Biophys. Res. Commun.">
        <title>Purification and characterization of a novel 7-kDa non-specific lipid transfer protein-2 from rice (Oryza sativa).</title>
        <authorList>
            <person name="Liu Y.-J."/>
            <person name="Samuel D."/>
            <person name="Lin C.H."/>
            <person name="Lyu P.-C."/>
        </authorList>
    </citation>
    <scope>PROTEIN SEQUENCE OF 28-96</scope>
    <scope>MASS SPECTROMETRY</scope>
    <scope>DISULFIDE BONDS</scope>
    <source>
        <tissue>Seed</tissue>
    </source>
</reference>
<reference key="8">
    <citation type="journal article" date="2002" name="J. Biol. Chem.">
        <title>Solution structure of plant nonspecific lipid transfer protein-2 from rice (Oryza sativa).</title>
        <authorList>
            <person name="Samuel D."/>
            <person name="Liu Y.-J."/>
            <person name="Cheng C.S."/>
            <person name="Lyu P.-C."/>
        </authorList>
    </citation>
    <scope>STRUCTURE BY NMR OF 28-96</scope>
    <scope>DISULFIDE BONDS</scope>
</reference>
<sequence length="96" mass="9535">MMRKLAVLVLAVAMVAACGGGVVGVAGAGCNAGQLTVCTGAIAGGARPTAACCSSLRAQQGCFCQFAKDPRYGRYVNSPNARKAVSSCGIALPTCH</sequence>
<organism>
    <name type="scientific">Oryza sativa subsp. japonica</name>
    <name type="common">Rice</name>
    <dbReference type="NCBI Taxonomy" id="39947"/>
    <lineage>
        <taxon>Eukaryota</taxon>
        <taxon>Viridiplantae</taxon>
        <taxon>Streptophyta</taxon>
        <taxon>Embryophyta</taxon>
        <taxon>Tracheophyta</taxon>
        <taxon>Spermatophyta</taxon>
        <taxon>Magnoliopsida</taxon>
        <taxon>Liliopsida</taxon>
        <taxon>Poales</taxon>
        <taxon>Poaceae</taxon>
        <taxon>BOP clade</taxon>
        <taxon>Oryzoideae</taxon>
        <taxon>Oryzeae</taxon>
        <taxon>Oryzinae</taxon>
        <taxon>Oryza</taxon>
        <taxon>Oryza sativa</taxon>
    </lineage>
</organism>